<evidence type="ECO:0000255" key="1"/>
<evidence type="ECO:0000255" key="2">
    <source>
        <dbReference type="PROSITE-ProRule" id="PRU00521"/>
    </source>
</evidence>
<evidence type="ECO:0000256" key="3">
    <source>
        <dbReference type="SAM" id="MobiDB-lite"/>
    </source>
</evidence>
<evidence type="ECO:0007744" key="4">
    <source>
    </source>
</evidence>
<sequence>MEGTPAANWSVELDLGSGVPPGEEGNRTAGPPQRNEALARVEVAVLCLILFLALSGNACVLLALRTTRHKHSRLFFFMKHLSIADLVVAVFQVLPQLLWDITFRFYGPDLLCRLVKYLQVVGMFASTYLLLLMSLDRCLAICQPLRSLRRRTDRLAVLGTWLGCLVASAPQVHIFSLREVADGVFDCWAVFIQPWGPKAYVTWITLAVYIVPVIVLAACYGLISFKIWQNLRLKTAAAAAAAEGNDAAGGAGRAALARVSSVKLISKAKIRTVKMTFIIVLAFIVCWTPFFFVQMWSVWDVNAPKEASAFIIAMLLASLNSCCNPWIYMLFTGHLFHELVQRFFCCSARYLKGSRPGETSVSKKSNSSTFVLSRRSSSQRSCSQPSSA</sequence>
<gene>
    <name type="primary">Oxtr</name>
    <name type="synonym">Otr</name>
</gene>
<keyword id="KW-1003">Cell membrane</keyword>
<keyword id="KW-1015">Disulfide bond</keyword>
<keyword id="KW-0297">G-protein coupled receptor</keyword>
<keyword id="KW-0325">Glycoprotein</keyword>
<keyword id="KW-0472">Membrane</keyword>
<keyword id="KW-0597">Phosphoprotein</keyword>
<keyword id="KW-0675">Receptor</keyword>
<keyword id="KW-1185">Reference proteome</keyword>
<keyword id="KW-0807">Transducer</keyword>
<keyword id="KW-0812">Transmembrane</keyword>
<keyword id="KW-1133">Transmembrane helix</keyword>
<reference key="1">
    <citation type="journal article" date="1995" name="Proc. Natl. Acad. Sci. U.S.A.">
        <title>Structure, characterization, and expression of the rat oxytocin receptor gene.</title>
        <authorList>
            <person name="Rozen F."/>
            <person name="Russo C."/>
            <person name="Banville D."/>
            <person name="Zingg H.H."/>
        </authorList>
    </citation>
    <scope>NUCLEOTIDE SEQUENCE [GENOMIC DNA]</scope>
    <source>
        <strain>Sprague-Dawley</strain>
        <tissue>Liver</tissue>
    </source>
</reference>
<reference key="2">
    <citation type="submission" date="2000-08" db="EMBL/GenBank/DDBJ databases">
        <authorList>
            <person name="Zingg H.H."/>
        </authorList>
    </citation>
    <scope>SEQUENCE REVISION TO 84</scope>
</reference>
<reference key="3">
    <citation type="submission" date="2003-07" db="EMBL/GenBank/DDBJ databases">
        <title>Rat oxytocin receptor gene nucleotide sequence.</title>
        <authorList>
            <person name="Terry R."/>
            <person name="Mullins D."/>
        </authorList>
    </citation>
    <scope>NUCLEOTIDE SEQUENCE [MRNA]</scope>
    <source>
        <strain>Sprague-Dawley</strain>
    </source>
</reference>
<reference key="4">
    <citation type="journal article" date="2012" name="Nat. Commun.">
        <title>Quantitative maps of protein phosphorylation sites across 14 different rat organs and tissues.</title>
        <authorList>
            <person name="Lundby A."/>
            <person name="Secher A."/>
            <person name="Lage K."/>
            <person name="Nordsborg N.B."/>
            <person name="Dmytriyev A."/>
            <person name="Lundby C."/>
            <person name="Olsen J.V."/>
        </authorList>
    </citation>
    <scope>PHOSPHORYLATION [LARGE SCALE ANALYSIS] AT SER-365 AND SER-367</scope>
    <scope>IDENTIFICATION BY MASS SPECTROMETRY [LARGE SCALE ANALYSIS]</scope>
</reference>
<dbReference type="EMBL" id="U15280">
    <property type="protein sequence ID" value="AAC53245.2"/>
    <property type="molecule type" value="Genomic_DNA"/>
</dbReference>
<dbReference type="EMBL" id="U15169">
    <property type="protein sequence ID" value="AAC53245.2"/>
    <property type="status" value="JOINED"/>
    <property type="molecule type" value="Genomic_DNA"/>
</dbReference>
<dbReference type="EMBL" id="AY338194">
    <property type="protein sequence ID" value="AAQ01564.1"/>
    <property type="molecule type" value="mRNA"/>
</dbReference>
<dbReference type="RefSeq" id="NP_037003.2">
    <property type="nucleotide sequence ID" value="NM_012871.3"/>
</dbReference>
<dbReference type="RefSeq" id="XP_006237070.1">
    <property type="nucleotide sequence ID" value="XM_006237008.3"/>
</dbReference>
<dbReference type="RefSeq" id="XP_008761401.1">
    <property type="nucleotide sequence ID" value="XM_008763179.2"/>
</dbReference>
<dbReference type="RefSeq" id="XP_008761402.1">
    <property type="nucleotide sequence ID" value="XM_008763180.2"/>
</dbReference>
<dbReference type="RefSeq" id="XP_008761403.1">
    <property type="nucleotide sequence ID" value="XM_008763181.2"/>
</dbReference>
<dbReference type="RefSeq" id="XP_008761404.1">
    <property type="nucleotide sequence ID" value="XM_008763182.2"/>
</dbReference>
<dbReference type="RefSeq" id="XP_063141671.1">
    <property type="nucleotide sequence ID" value="XM_063285601.1"/>
</dbReference>
<dbReference type="RefSeq" id="XP_063141672.1">
    <property type="nucleotide sequence ID" value="XM_063285602.1"/>
</dbReference>
<dbReference type="RefSeq" id="XP_063141673.1">
    <property type="nucleotide sequence ID" value="XM_063285603.1"/>
</dbReference>
<dbReference type="SMR" id="P70536"/>
<dbReference type="CORUM" id="P70536"/>
<dbReference type="FunCoup" id="P70536">
    <property type="interactions" value="191"/>
</dbReference>
<dbReference type="IntAct" id="P70536">
    <property type="interactions" value="2"/>
</dbReference>
<dbReference type="STRING" id="10116.ENSRNOP00000007724"/>
<dbReference type="BindingDB" id="P70536"/>
<dbReference type="ChEMBL" id="CHEMBL3996"/>
<dbReference type="DrugCentral" id="P70536"/>
<dbReference type="GuidetoPHARMACOLOGY" id="369"/>
<dbReference type="GlyCosmos" id="P70536">
    <property type="glycosylation" value="2 sites, No reported glycans"/>
</dbReference>
<dbReference type="GlyGen" id="P70536">
    <property type="glycosylation" value="2 sites"/>
</dbReference>
<dbReference type="iPTMnet" id="P70536"/>
<dbReference type="PhosphoSitePlus" id="P70536"/>
<dbReference type="PaxDb" id="10116-ENSRNOP00000007724"/>
<dbReference type="Ensembl" id="ENSRNOT00000007724.3">
    <property type="protein sequence ID" value="ENSRNOP00000007724.1"/>
    <property type="gene ID" value="ENSRNOG00000005806.3"/>
</dbReference>
<dbReference type="GeneID" id="25342"/>
<dbReference type="KEGG" id="rno:25342"/>
<dbReference type="UCSC" id="RGD:3239">
    <property type="organism name" value="rat"/>
</dbReference>
<dbReference type="AGR" id="RGD:3239"/>
<dbReference type="CTD" id="5021"/>
<dbReference type="RGD" id="3239">
    <property type="gene designation" value="Oxtr"/>
</dbReference>
<dbReference type="eggNOG" id="KOG3656">
    <property type="taxonomic scope" value="Eukaryota"/>
</dbReference>
<dbReference type="GeneTree" id="ENSGT01050000244882"/>
<dbReference type="HOGENOM" id="CLU_009579_15_3_1"/>
<dbReference type="InParanoid" id="P70536"/>
<dbReference type="OMA" id="HLFHELM"/>
<dbReference type="OrthoDB" id="6435638at2759"/>
<dbReference type="PhylomeDB" id="P70536"/>
<dbReference type="TreeFam" id="TF106499"/>
<dbReference type="Reactome" id="R-RNO-388479">
    <property type="pathway name" value="Vasopressin-like receptors"/>
</dbReference>
<dbReference type="Reactome" id="R-RNO-416476">
    <property type="pathway name" value="G alpha (q) signalling events"/>
</dbReference>
<dbReference type="PRO" id="PR:P70536"/>
<dbReference type="Proteomes" id="UP000002494">
    <property type="component" value="Chromosome 4"/>
</dbReference>
<dbReference type="Bgee" id="ENSRNOG00000005806">
    <property type="expression patterns" value="Expressed in ileum and 9 other cell types or tissues"/>
</dbReference>
<dbReference type="GO" id="GO:0005912">
    <property type="term" value="C:adherens junction"/>
    <property type="evidence" value="ECO:0000314"/>
    <property type="project" value="RGD"/>
</dbReference>
<dbReference type="GO" id="GO:0016324">
    <property type="term" value="C:apical plasma membrane"/>
    <property type="evidence" value="ECO:0000314"/>
    <property type="project" value="RGD"/>
</dbReference>
<dbReference type="GO" id="GO:0005902">
    <property type="term" value="C:microvillus"/>
    <property type="evidence" value="ECO:0000314"/>
    <property type="project" value="RGD"/>
</dbReference>
<dbReference type="GO" id="GO:0005886">
    <property type="term" value="C:plasma membrane"/>
    <property type="evidence" value="ECO:0000318"/>
    <property type="project" value="GO_Central"/>
</dbReference>
<dbReference type="GO" id="GO:0035255">
    <property type="term" value="F:ionotropic glutamate receptor binding"/>
    <property type="evidence" value="ECO:0000353"/>
    <property type="project" value="RGD"/>
</dbReference>
<dbReference type="GO" id="GO:0004990">
    <property type="term" value="F:oxytocin receptor activity"/>
    <property type="evidence" value="ECO:0000314"/>
    <property type="project" value="RGD"/>
</dbReference>
<dbReference type="GO" id="GO:0017046">
    <property type="term" value="F:peptide hormone binding"/>
    <property type="evidence" value="ECO:0000314"/>
    <property type="project" value="RGD"/>
</dbReference>
<dbReference type="GO" id="GO:0005000">
    <property type="term" value="F:vasopressin receptor activity"/>
    <property type="evidence" value="ECO:0000318"/>
    <property type="project" value="GO_Central"/>
</dbReference>
<dbReference type="GO" id="GO:0032870">
    <property type="term" value="P:cellular response to hormone stimulus"/>
    <property type="evidence" value="ECO:0000318"/>
    <property type="project" value="GO_Central"/>
</dbReference>
<dbReference type="GO" id="GO:0048565">
    <property type="term" value="P:digestive tract development"/>
    <property type="evidence" value="ECO:0000270"/>
    <property type="project" value="RGD"/>
</dbReference>
<dbReference type="GO" id="GO:0042755">
    <property type="term" value="P:eating behavior"/>
    <property type="evidence" value="ECO:0000315"/>
    <property type="project" value="RGD"/>
</dbReference>
<dbReference type="GO" id="GO:0070371">
    <property type="term" value="P:ERK1 and ERK2 cascade"/>
    <property type="evidence" value="ECO:0000315"/>
    <property type="project" value="RGD"/>
</dbReference>
<dbReference type="GO" id="GO:0044849">
    <property type="term" value="P:estrous cycle"/>
    <property type="evidence" value="ECO:0000270"/>
    <property type="project" value="RGD"/>
</dbReference>
<dbReference type="GO" id="GO:0007565">
    <property type="term" value="P:female pregnancy"/>
    <property type="evidence" value="ECO:0000270"/>
    <property type="project" value="RGD"/>
</dbReference>
<dbReference type="GO" id="GO:0007186">
    <property type="term" value="P:G protein-coupled receptor signaling pathway"/>
    <property type="evidence" value="ECO:0000315"/>
    <property type="project" value="RGD"/>
</dbReference>
<dbReference type="GO" id="GO:0007507">
    <property type="term" value="P:heart development"/>
    <property type="evidence" value="ECO:0000270"/>
    <property type="project" value="RGD"/>
</dbReference>
<dbReference type="GO" id="GO:0042711">
    <property type="term" value="P:maternal behavior"/>
    <property type="evidence" value="ECO:0000315"/>
    <property type="project" value="RGD"/>
</dbReference>
<dbReference type="GO" id="GO:0060137">
    <property type="term" value="P:maternal process involved in parturition"/>
    <property type="evidence" value="ECO:0000270"/>
    <property type="project" value="RGD"/>
</dbReference>
<dbReference type="GO" id="GO:0007613">
    <property type="term" value="P:memory"/>
    <property type="evidence" value="ECO:0000315"/>
    <property type="project" value="RGD"/>
</dbReference>
<dbReference type="GO" id="GO:0045777">
    <property type="term" value="P:positive regulation of blood pressure"/>
    <property type="evidence" value="ECO:0000266"/>
    <property type="project" value="RGD"/>
</dbReference>
<dbReference type="GO" id="GO:0120162">
    <property type="term" value="P:positive regulation of cold-induced thermogenesis"/>
    <property type="evidence" value="ECO:0000250"/>
    <property type="project" value="YuBioLab"/>
</dbReference>
<dbReference type="GO" id="GO:0007204">
    <property type="term" value="P:positive regulation of cytosolic calcium ion concentration"/>
    <property type="evidence" value="ECO:0000315"/>
    <property type="project" value="RGD"/>
</dbReference>
<dbReference type="GO" id="GO:0010701">
    <property type="term" value="P:positive regulation of norepinephrine secretion"/>
    <property type="evidence" value="ECO:0000315"/>
    <property type="project" value="RGD"/>
</dbReference>
<dbReference type="GO" id="GO:0060406">
    <property type="term" value="P:positive regulation of penile erection"/>
    <property type="evidence" value="ECO:0000315"/>
    <property type="project" value="RGD"/>
</dbReference>
<dbReference type="GO" id="GO:0051965">
    <property type="term" value="P:positive regulation of synapse assembly"/>
    <property type="evidence" value="ECO:0000315"/>
    <property type="project" value="RGD"/>
</dbReference>
<dbReference type="GO" id="GO:0032230">
    <property type="term" value="P:positive regulation of synaptic transmission, GABAergic"/>
    <property type="evidence" value="ECO:0000315"/>
    <property type="project" value="RGD"/>
</dbReference>
<dbReference type="GO" id="GO:0051968">
    <property type="term" value="P:positive regulation of synaptic transmission, glutamatergic"/>
    <property type="evidence" value="ECO:0000315"/>
    <property type="project" value="RGD"/>
</dbReference>
<dbReference type="GO" id="GO:0070474">
    <property type="term" value="P:positive regulation of uterine smooth muscle contraction"/>
    <property type="evidence" value="ECO:0000315"/>
    <property type="project" value="RGD"/>
</dbReference>
<dbReference type="GO" id="GO:0045907">
    <property type="term" value="P:positive regulation of vasoconstriction"/>
    <property type="evidence" value="ECO:0000318"/>
    <property type="project" value="GO_Central"/>
</dbReference>
<dbReference type="GO" id="GO:0001992">
    <property type="term" value="P:regulation of systemic arterial blood pressure by vasopressin"/>
    <property type="evidence" value="ECO:0000318"/>
    <property type="project" value="GO_Central"/>
</dbReference>
<dbReference type="GO" id="GO:0001975">
    <property type="term" value="P:response to amphetamine"/>
    <property type="evidence" value="ECO:0000315"/>
    <property type="project" value="RGD"/>
</dbReference>
<dbReference type="GO" id="GO:0034059">
    <property type="term" value="P:response to anoxia"/>
    <property type="evidence" value="ECO:0000315"/>
    <property type="project" value="RGD"/>
</dbReference>
<dbReference type="GO" id="GO:0042220">
    <property type="term" value="P:response to cocaine"/>
    <property type="evidence" value="ECO:0000270"/>
    <property type="project" value="RGD"/>
</dbReference>
<dbReference type="GO" id="GO:0034097">
    <property type="term" value="P:response to cytokine"/>
    <property type="evidence" value="ECO:0000270"/>
    <property type="project" value="RGD"/>
</dbReference>
<dbReference type="GO" id="GO:0032355">
    <property type="term" value="P:response to estradiol"/>
    <property type="evidence" value="ECO:0000270"/>
    <property type="project" value="RGD"/>
</dbReference>
<dbReference type="GO" id="GO:0033595">
    <property type="term" value="P:response to genistein"/>
    <property type="evidence" value="ECO:0000270"/>
    <property type="project" value="RGD"/>
</dbReference>
<dbReference type="GO" id="GO:0043434">
    <property type="term" value="P:response to peptide hormone"/>
    <property type="evidence" value="ECO:0000270"/>
    <property type="project" value="RGD"/>
</dbReference>
<dbReference type="GO" id="GO:1904627">
    <property type="term" value="P:response to phorbol 13-acetate 12-myristate"/>
    <property type="evidence" value="ECO:0000270"/>
    <property type="project" value="RGD"/>
</dbReference>
<dbReference type="GO" id="GO:0032570">
    <property type="term" value="P:response to progesterone"/>
    <property type="evidence" value="ECO:0000270"/>
    <property type="project" value="RGD"/>
</dbReference>
<dbReference type="GO" id="GO:0048545">
    <property type="term" value="P:response to steroid hormone"/>
    <property type="evidence" value="ECO:0000315"/>
    <property type="project" value="RGD"/>
</dbReference>
<dbReference type="GO" id="GO:0009410">
    <property type="term" value="P:response to xenobiotic stimulus"/>
    <property type="evidence" value="ECO:0000270"/>
    <property type="project" value="RGD"/>
</dbReference>
<dbReference type="GO" id="GO:0035176">
    <property type="term" value="P:social behavior"/>
    <property type="evidence" value="ECO:0000315"/>
    <property type="project" value="RGD"/>
</dbReference>
<dbReference type="GO" id="GO:0042713">
    <property type="term" value="P:sperm ejaculation"/>
    <property type="evidence" value="ECO:0000315"/>
    <property type="project" value="RGD"/>
</dbReference>
<dbReference type="GO" id="GO:0001967">
    <property type="term" value="P:suckling behavior"/>
    <property type="evidence" value="ECO:0000315"/>
    <property type="project" value="RGD"/>
</dbReference>
<dbReference type="GO" id="GO:0021537">
    <property type="term" value="P:telencephalon development"/>
    <property type="evidence" value="ECO:0000270"/>
    <property type="project" value="RGD"/>
</dbReference>
<dbReference type="CDD" id="cd15387">
    <property type="entry name" value="7tmA_OT_R"/>
    <property type="match status" value="1"/>
</dbReference>
<dbReference type="FunFam" id="1.20.1070.10:FF:000145">
    <property type="entry name" value="Oxytocin receptor"/>
    <property type="match status" value="1"/>
</dbReference>
<dbReference type="Gene3D" id="1.20.1070.10">
    <property type="entry name" value="Rhodopsin 7-helix transmembrane proteins"/>
    <property type="match status" value="1"/>
</dbReference>
<dbReference type="InterPro" id="IPR000276">
    <property type="entry name" value="GPCR_Rhodpsn"/>
</dbReference>
<dbReference type="InterPro" id="IPR017452">
    <property type="entry name" value="GPCR_Rhodpsn_7TM"/>
</dbReference>
<dbReference type="InterPro" id="IPR002062">
    <property type="entry name" value="Oxytocn_rcpt"/>
</dbReference>
<dbReference type="InterPro" id="IPR001817">
    <property type="entry name" value="Vasoprsn_rcpt"/>
</dbReference>
<dbReference type="PANTHER" id="PTHR24241">
    <property type="entry name" value="NEUROPEPTIDE RECEPTOR-RELATED G-PROTEIN COUPLED RECEPTOR"/>
    <property type="match status" value="1"/>
</dbReference>
<dbReference type="PANTHER" id="PTHR24241:SF89">
    <property type="entry name" value="OXYTOCIN RECEPTOR"/>
    <property type="match status" value="1"/>
</dbReference>
<dbReference type="Pfam" id="PF00001">
    <property type="entry name" value="7tm_1"/>
    <property type="match status" value="1"/>
</dbReference>
<dbReference type="PRINTS" id="PR00237">
    <property type="entry name" value="GPCRRHODOPSN"/>
</dbReference>
<dbReference type="PRINTS" id="PR00665">
    <property type="entry name" value="OXYTOCINR"/>
</dbReference>
<dbReference type="PRINTS" id="PR00896">
    <property type="entry name" value="VASOPRESSINR"/>
</dbReference>
<dbReference type="SUPFAM" id="SSF81321">
    <property type="entry name" value="Family A G protein-coupled receptor-like"/>
    <property type="match status" value="1"/>
</dbReference>
<dbReference type="PROSITE" id="PS00237">
    <property type="entry name" value="G_PROTEIN_RECEP_F1_1"/>
    <property type="match status" value="1"/>
</dbReference>
<dbReference type="PROSITE" id="PS50262">
    <property type="entry name" value="G_PROTEIN_RECEP_F1_2"/>
    <property type="match status" value="1"/>
</dbReference>
<proteinExistence type="evidence at protein level"/>
<comment type="function">
    <text>Receptor for oxytocin. The activity of this receptor is mediated by G proteins which activate a phosphatidylinositol-calcium second messenger system.</text>
</comment>
<comment type="subcellular location">
    <subcellularLocation>
        <location>Cell membrane</location>
        <topology>Multi-pass membrane protein</topology>
    </subcellularLocation>
</comment>
<comment type="similarity">
    <text evidence="2">Belongs to the G-protein coupled receptor 1 family. Vasopressin/oxytocin receptor subfamily.</text>
</comment>
<organism>
    <name type="scientific">Rattus norvegicus</name>
    <name type="common">Rat</name>
    <dbReference type="NCBI Taxonomy" id="10116"/>
    <lineage>
        <taxon>Eukaryota</taxon>
        <taxon>Metazoa</taxon>
        <taxon>Chordata</taxon>
        <taxon>Craniata</taxon>
        <taxon>Vertebrata</taxon>
        <taxon>Euteleostomi</taxon>
        <taxon>Mammalia</taxon>
        <taxon>Eutheria</taxon>
        <taxon>Euarchontoglires</taxon>
        <taxon>Glires</taxon>
        <taxon>Rodentia</taxon>
        <taxon>Myomorpha</taxon>
        <taxon>Muroidea</taxon>
        <taxon>Muridae</taxon>
        <taxon>Murinae</taxon>
        <taxon>Rattus</taxon>
    </lineage>
</organism>
<accession>P70536</accession>
<accession>Q53ZC5</accession>
<feature type="chain" id="PRO_0000070002" description="Oxytocin receptor">
    <location>
        <begin position="1"/>
        <end position="388"/>
    </location>
</feature>
<feature type="topological domain" description="Extracellular" evidence="1">
    <location>
        <begin position="1"/>
        <end position="38"/>
    </location>
</feature>
<feature type="transmembrane region" description="Helical; Name=1" evidence="1">
    <location>
        <begin position="39"/>
        <end position="63"/>
    </location>
</feature>
<feature type="topological domain" description="Cytoplasmic" evidence="1">
    <location>
        <begin position="64"/>
        <end position="74"/>
    </location>
</feature>
<feature type="transmembrane region" description="Helical; Name=2" evidence="1">
    <location>
        <begin position="75"/>
        <end position="97"/>
    </location>
</feature>
<feature type="topological domain" description="Extracellular" evidence="1">
    <location>
        <begin position="98"/>
        <end position="113"/>
    </location>
</feature>
<feature type="transmembrane region" description="Helical; Name=3" evidence="1">
    <location>
        <begin position="114"/>
        <end position="135"/>
    </location>
</feature>
<feature type="topological domain" description="Cytoplasmic" evidence="1">
    <location>
        <begin position="136"/>
        <end position="154"/>
    </location>
</feature>
<feature type="transmembrane region" description="Helical; Name=4" evidence="1">
    <location>
        <begin position="155"/>
        <end position="175"/>
    </location>
</feature>
<feature type="topological domain" description="Extracellular" evidence="1">
    <location>
        <begin position="176"/>
        <end position="202"/>
    </location>
</feature>
<feature type="transmembrane region" description="Helical; Name=5" evidence="1">
    <location>
        <begin position="203"/>
        <end position="225"/>
    </location>
</feature>
<feature type="topological domain" description="Cytoplasmic" evidence="1">
    <location>
        <begin position="226"/>
        <end position="274"/>
    </location>
</feature>
<feature type="transmembrane region" description="Helical; Name=6" evidence="1">
    <location>
        <begin position="275"/>
        <end position="293"/>
    </location>
</feature>
<feature type="topological domain" description="Extracellular" evidence="1">
    <location>
        <begin position="294"/>
        <end position="308"/>
    </location>
</feature>
<feature type="transmembrane region" description="Helical; Name=7" evidence="1">
    <location>
        <begin position="309"/>
        <end position="331"/>
    </location>
</feature>
<feature type="topological domain" description="Cytoplasmic" evidence="1">
    <location>
        <begin position="332"/>
        <end position="388"/>
    </location>
</feature>
<feature type="region of interest" description="Disordered" evidence="3">
    <location>
        <begin position="1"/>
        <end position="32"/>
    </location>
</feature>
<feature type="region of interest" description="Disordered" evidence="3">
    <location>
        <begin position="354"/>
        <end position="388"/>
    </location>
</feature>
<feature type="compositionally biased region" description="Low complexity" evidence="3">
    <location>
        <begin position="365"/>
        <end position="388"/>
    </location>
</feature>
<feature type="modified residue" description="Phosphoserine" evidence="4">
    <location>
        <position position="365"/>
    </location>
</feature>
<feature type="modified residue" description="Phosphoserine" evidence="4">
    <location>
        <position position="367"/>
    </location>
</feature>
<feature type="glycosylation site" description="N-linked (GlcNAc...) asparagine" evidence="1">
    <location>
        <position position="8"/>
    </location>
</feature>
<feature type="glycosylation site" description="N-linked (GlcNAc...) asparagine" evidence="1">
    <location>
        <position position="26"/>
    </location>
</feature>
<feature type="disulfide bond" evidence="2">
    <location>
        <begin position="112"/>
        <end position="187"/>
    </location>
</feature>
<name>OXYR_RAT</name>
<protein>
    <recommendedName>
        <fullName>Oxytocin receptor</fullName>
        <shortName>OT-R</shortName>
    </recommendedName>
</protein>